<reference key="1">
    <citation type="submission" date="2006-12" db="EMBL/GenBank/DDBJ databases">
        <title>Complete sequence of chromosome 1 of Acidovorax sp. JS42.</title>
        <authorList>
            <person name="Copeland A."/>
            <person name="Lucas S."/>
            <person name="Lapidus A."/>
            <person name="Barry K."/>
            <person name="Detter J.C."/>
            <person name="Glavina del Rio T."/>
            <person name="Dalin E."/>
            <person name="Tice H."/>
            <person name="Pitluck S."/>
            <person name="Chertkov O."/>
            <person name="Brettin T."/>
            <person name="Bruce D."/>
            <person name="Han C."/>
            <person name="Tapia R."/>
            <person name="Gilna P."/>
            <person name="Schmutz J."/>
            <person name="Larimer F."/>
            <person name="Land M."/>
            <person name="Hauser L."/>
            <person name="Kyrpides N."/>
            <person name="Kim E."/>
            <person name="Stahl D."/>
            <person name="Richardson P."/>
        </authorList>
    </citation>
    <scope>NUCLEOTIDE SEQUENCE [LARGE SCALE GENOMIC DNA]</scope>
    <source>
        <strain>JS42</strain>
    </source>
</reference>
<feature type="chain" id="PRO_1000070212" description="Beta-ketoacyl-[acyl-carrier-protein] synthase III">
    <location>
        <begin position="1"/>
        <end position="325"/>
    </location>
</feature>
<feature type="region of interest" description="ACP-binding" evidence="1">
    <location>
        <begin position="253"/>
        <end position="257"/>
    </location>
</feature>
<feature type="active site" evidence="1">
    <location>
        <position position="119"/>
    </location>
</feature>
<feature type="active site" evidence="1">
    <location>
        <position position="252"/>
    </location>
</feature>
<feature type="active site" evidence="1">
    <location>
        <position position="282"/>
    </location>
</feature>
<protein>
    <recommendedName>
        <fullName evidence="1">Beta-ketoacyl-[acyl-carrier-protein] synthase III</fullName>
        <shortName evidence="1">Beta-ketoacyl-ACP synthase III</shortName>
        <shortName evidence="1">KAS III</shortName>
        <ecNumber evidence="1">2.3.1.180</ecNumber>
    </recommendedName>
    <alternativeName>
        <fullName evidence="1">3-oxoacyl-[acyl-carrier-protein] synthase 3</fullName>
    </alternativeName>
    <alternativeName>
        <fullName evidence="1">3-oxoacyl-[acyl-carrier-protein] synthase III</fullName>
    </alternativeName>
</protein>
<keyword id="KW-0012">Acyltransferase</keyword>
<keyword id="KW-0963">Cytoplasm</keyword>
<keyword id="KW-0275">Fatty acid biosynthesis</keyword>
<keyword id="KW-0276">Fatty acid metabolism</keyword>
<keyword id="KW-0444">Lipid biosynthesis</keyword>
<keyword id="KW-0443">Lipid metabolism</keyword>
<keyword id="KW-0511">Multifunctional enzyme</keyword>
<keyword id="KW-0808">Transferase</keyword>
<gene>
    <name evidence="1" type="primary">fabH</name>
    <name type="ordered locus">Ajs_3280</name>
</gene>
<dbReference type="EC" id="2.3.1.180" evidence="1"/>
<dbReference type="EMBL" id="CP000539">
    <property type="protein sequence ID" value="ABM43403.1"/>
    <property type="molecule type" value="Genomic_DNA"/>
</dbReference>
<dbReference type="SMR" id="A1WAX8"/>
<dbReference type="STRING" id="232721.Ajs_3280"/>
<dbReference type="KEGG" id="ajs:Ajs_3280"/>
<dbReference type="eggNOG" id="COG0332">
    <property type="taxonomic scope" value="Bacteria"/>
</dbReference>
<dbReference type="HOGENOM" id="CLU_039592_3_1_4"/>
<dbReference type="UniPathway" id="UPA00094"/>
<dbReference type="Proteomes" id="UP000000645">
    <property type="component" value="Chromosome"/>
</dbReference>
<dbReference type="GO" id="GO:0005737">
    <property type="term" value="C:cytoplasm"/>
    <property type="evidence" value="ECO:0007669"/>
    <property type="project" value="UniProtKB-SubCell"/>
</dbReference>
<dbReference type="GO" id="GO:0004315">
    <property type="term" value="F:3-oxoacyl-[acyl-carrier-protein] synthase activity"/>
    <property type="evidence" value="ECO:0007669"/>
    <property type="project" value="InterPro"/>
</dbReference>
<dbReference type="GO" id="GO:0033818">
    <property type="term" value="F:beta-ketoacyl-acyl-carrier-protein synthase III activity"/>
    <property type="evidence" value="ECO:0007669"/>
    <property type="project" value="UniProtKB-UniRule"/>
</dbReference>
<dbReference type="GO" id="GO:0006633">
    <property type="term" value="P:fatty acid biosynthetic process"/>
    <property type="evidence" value="ECO:0007669"/>
    <property type="project" value="UniProtKB-UniRule"/>
</dbReference>
<dbReference type="GO" id="GO:0044550">
    <property type="term" value="P:secondary metabolite biosynthetic process"/>
    <property type="evidence" value="ECO:0007669"/>
    <property type="project" value="TreeGrafter"/>
</dbReference>
<dbReference type="CDD" id="cd00830">
    <property type="entry name" value="KAS_III"/>
    <property type="match status" value="1"/>
</dbReference>
<dbReference type="FunFam" id="3.40.47.10:FF:000004">
    <property type="entry name" value="3-oxoacyl-[acyl-carrier-protein] synthase 3"/>
    <property type="match status" value="1"/>
</dbReference>
<dbReference type="Gene3D" id="3.40.47.10">
    <property type="match status" value="1"/>
</dbReference>
<dbReference type="HAMAP" id="MF_01815">
    <property type="entry name" value="FabH"/>
    <property type="match status" value="1"/>
</dbReference>
<dbReference type="InterPro" id="IPR013747">
    <property type="entry name" value="ACP_syn_III_C"/>
</dbReference>
<dbReference type="InterPro" id="IPR013751">
    <property type="entry name" value="ACP_syn_III_N"/>
</dbReference>
<dbReference type="InterPro" id="IPR004655">
    <property type="entry name" value="FabH"/>
</dbReference>
<dbReference type="InterPro" id="IPR016039">
    <property type="entry name" value="Thiolase-like"/>
</dbReference>
<dbReference type="NCBIfam" id="TIGR00747">
    <property type="entry name" value="fabH"/>
    <property type="match status" value="1"/>
</dbReference>
<dbReference type="NCBIfam" id="NF006829">
    <property type="entry name" value="PRK09352.1"/>
    <property type="match status" value="1"/>
</dbReference>
<dbReference type="PANTHER" id="PTHR34069">
    <property type="entry name" value="3-OXOACYL-[ACYL-CARRIER-PROTEIN] SYNTHASE 3"/>
    <property type="match status" value="1"/>
</dbReference>
<dbReference type="PANTHER" id="PTHR34069:SF2">
    <property type="entry name" value="BETA-KETOACYL-[ACYL-CARRIER-PROTEIN] SYNTHASE III"/>
    <property type="match status" value="1"/>
</dbReference>
<dbReference type="Pfam" id="PF08545">
    <property type="entry name" value="ACP_syn_III"/>
    <property type="match status" value="1"/>
</dbReference>
<dbReference type="Pfam" id="PF08541">
    <property type="entry name" value="ACP_syn_III_C"/>
    <property type="match status" value="1"/>
</dbReference>
<dbReference type="SUPFAM" id="SSF53901">
    <property type="entry name" value="Thiolase-like"/>
    <property type="match status" value="1"/>
</dbReference>
<sequence>MTRYSRITGTGSYLPPHRVTNDDLVAQLAQQGIETSDEWIVERTGIRARHFADRDVTSSDLALEASRRALEAAGCQAQDLDLIIVATSTPDMVFPSTACILQNKLGANGCPAFDVQAVCSGFVYALTVADAMIRSGGARRALVVGSEVFSRILDFNDRTTCVLFGDGAGAVVLEASEAPGILASDLHADGSHVGILCVPGNVYGGQILGDPLLKMDGQAVFKLAVGVLEKAARATLDKAGMTDADIDWLIPHQANIRIMQSTARKLKLSMDKVVVTVDQHGNTSAASIPLALDHGVRNGQVQPGQTVLLEGVGGGFTWGAVLLKM</sequence>
<proteinExistence type="inferred from homology"/>
<name>FABH_ACISJ</name>
<evidence type="ECO:0000255" key="1">
    <source>
        <dbReference type="HAMAP-Rule" id="MF_01815"/>
    </source>
</evidence>
<accession>A1WAX8</accession>
<organism>
    <name type="scientific">Acidovorax sp. (strain JS42)</name>
    <dbReference type="NCBI Taxonomy" id="232721"/>
    <lineage>
        <taxon>Bacteria</taxon>
        <taxon>Pseudomonadati</taxon>
        <taxon>Pseudomonadota</taxon>
        <taxon>Betaproteobacteria</taxon>
        <taxon>Burkholderiales</taxon>
        <taxon>Comamonadaceae</taxon>
        <taxon>Acidovorax</taxon>
    </lineage>
</organism>
<comment type="function">
    <text evidence="1">Catalyzes the condensation reaction of fatty acid synthesis by the addition to an acyl acceptor of two carbons from malonyl-ACP. Catalyzes the first condensation reaction which initiates fatty acid synthesis and may therefore play a role in governing the total rate of fatty acid production. Possesses both acetoacetyl-ACP synthase and acetyl transacylase activities. Its substrate specificity determines the biosynthesis of branched-chain and/or straight-chain of fatty acids.</text>
</comment>
<comment type="catalytic activity">
    <reaction evidence="1">
        <text>malonyl-[ACP] + acetyl-CoA + H(+) = 3-oxobutanoyl-[ACP] + CO2 + CoA</text>
        <dbReference type="Rhea" id="RHEA:12080"/>
        <dbReference type="Rhea" id="RHEA-COMP:9623"/>
        <dbReference type="Rhea" id="RHEA-COMP:9625"/>
        <dbReference type="ChEBI" id="CHEBI:15378"/>
        <dbReference type="ChEBI" id="CHEBI:16526"/>
        <dbReference type="ChEBI" id="CHEBI:57287"/>
        <dbReference type="ChEBI" id="CHEBI:57288"/>
        <dbReference type="ChEBI" id="CHEBI:78449"/>
        <dbReference type="ChEBI" id="CHEBI:78450"/>
        <dbReference type="EC" id="2.3.1.180"/>
    </reaction>
</comment>
<comment type="pathway">
    <text evidence="1">Lipid metabolism; fatty acid biosynthesis.</text>
</comment>
<comment type="subunit">
    <text evidence="1">Homodimer.</text>
</comment>
<comment type="subcellular location">
    <subcellularLocation>
        <location evidence="1">Cytoplasm</location>
    </subcellularLocation>
</comment>
<comment type="domain">
    <text evidence="1">The last Arg residue of the ACP-binding site is essential for the weak association between ACP/AcpP and FabH.</text>
</comment>
<comment type="similarity">
    <text evidence="1">Belongs to the thiolase-like superfamily. FabH family.</text>
</comment>